<name>METK_CHLTE</name>
<comment type="function">
    <text evidence="1">Catalyzes the formation of S-adenosylmethionine (AdoMet) from methionine and ATP. The overall synthetic reaction is composed of two sequential steps, AdoMet formation and the subsequent tripolyphosphate hydrolysis which occurs prior to release of AdoMet from the enzyme.</text>
</comment>
<comment type="catalytic activity">
    <reaction evidence="1">
        <text>L-methionine + ATP + H2O = S-adenosyl-L-methionine + phosphate + diphosphate</text>
        <dbReference type="Rhea" id="RHEA:21080"/>
        <dbReference type="ChEBI" id="CHEBI:15377"/>
        <dbReference type="ChEBI" id="CHEBI:30616"/>
        <dbReference type="ChEBI" id="CHEBI:33019"/>
        <dbReference type="ChEBI" id="CHEBI:43474"/>
        <dbReference type="ChEBI" id="CHEBI:57844"/>
        <dbReference type="ChEBI" id="CHEBI:59789"/>
        <dbReference type="EC" id="2.5.1.6"/>
    </reaction>
</comment>
<comment type="cofactor">
    <cofactor evidence="1">
        <name>Mg(2+)</name>
        <dbReference type="ChEBI" id="CHEBI:18420"/>
    </cofactor>
    <text evidence="1">Binds 2 divalent ions per subunit.</text>
</comment>
<comment type="cofactor">
    <cofactor evidence="1">
        <name>K(+)</name>
        <dbReference type="ChEBI" id="CHEBI:29103"/>
    </cofactor>
    <text evidence="1">Binds 1 potassium ion per subunit.</text>
</comment>
<comment type="pathway">
    <text evidence="1">Amino-acid biosynthesis; S-adenosyl-L-methionine biosynthesis; S-adenosyl-L-methionine from L-methionine: step 1/1.</text>
</comment>
<comment type="subunit">
    <text evidence="1">Homotetramer; dimer of dimers.</text>
</comment>
<comment type="subcellular location">
    <subcellularLocation>
        <location evidence="1">Cytoplasm</location>
    </subcellularLocation>
</comment>
<comment type="similarity">
    <text evidence="1">Belongs to the AdoMet synthase family.</text>
</comment>
<comment type="sequence caution" evidence="2">
    <conflict type="erroneous initiation">
        <sequence resource="EMBL-CDS" id="AAM71959"/>
    </conflict>
</comment>
<accession>Q8KEG7</accession>
<protein>
    <recommendedName>
        <fullName evidence="1">S-adenosylmethionine synthase</fullName>
        <shortName evidence="1">AdoMet synthase</shortName>
        <ecNumber evidence="1">2.5.1.6</ecNumber>
    </recommendedName>
    <alternativeName>
        <fullName evidence="1">MAT</fullName>
    </alternativeName>
    <alternativeName>
        <fullName evidence="1">Methionine adenosyltransferase</fullName>
    </alternativeName>
</protein>
<reference key="1">
    <citation type="journal article" date="2002" name="Proc. Natl. Acad. Sci. U.S.A.">
        <title>The complete genome sequence of Chlorobium tepidum TLS, a photosynthetic, anaerobic, green-sulfur bacterium.</title>
        <authorList>
            <person name="Eisen J.A."/>
            <person name="Nelson K.E."/>
            <person name="Paulsen I.T."/>
            <person name="Heidelberg J.F."/>
            <person name="Wu M."/>
            <person name="Dodson R.J."/>
            <person name="DeBoy R.T."/>
            <person name="Gwinn M.L."/>
            <person name="Nelson W.C."/>
            <person name="Haft D.H."/>
            <person name="Hickey E.K."/>
            <person name="Peterson J.D."/>
            <person name="Durkin A.S."/>
            <person name="Kolonay J.F."/>
            <person name="Yang F."/>
            <person name="Holt I.E."/>
            <person name="Umayam L.A."/>
            <person name="Mason T.M."/>
            <person name="Brenner M."/>
            <person name="Shea T.P."/>
            <person name="Parksey D.S."/>
            <person name="Nierman W.C."/>
            <person name="Feldblyum T.V."/>
            <person name="Hansen C.L."/>
            <person name="Craven M.B."/>
            <person name="Radune D."/>
            <person name="Vamathevan J.J."/>
            <person name="Khouri H.M."/>
            <person name="White O."/>
            <person name="Gruber T.M."/>
            <person name="Ketchum K.A."/>
            <person name="Venter J.C."/>
            <person name="Tettelin H."/>
            <person name="Bryant D.A."/>
            <person name="Fraser C.M."/>
        </authorList>
    </citation>
    <scope>NUCLEOTIDE SEQUENCE [LARGE SCALE GENOMIC DNA]</scope>
    <source>
        <strain>ATCC 49652 / DSM 12025 / NBRC 103806 / TLS</strain>
    </source>
</reference>
<keyword id="KW-0067">ATP-binding</keyword>
<keyword id="KW-0963">Cytoplasm</keyword>
<keyword id="KW-0460">Magnesium</keyword>
<keyword id="KW-0479">Metal-binding</keyword>
<keyword id="KW-0547">Nucleotide-binding</keyword>
<keyword id="KW-0554">One-carbon metabolism</keyword>
<keyword id="KW-0630">Potassium</keyword>
<keyword id="KW-1185">Reference proteome</keyword>
<keyword id="KW-0808">Transferase</keyword>
<sequence>MSHSRYYFTSESVSEGHPDKVADQISDAVLDEFIKQDPNSRVACETFVTTGQVIVGGEVTSKGIVDVQTIARKTITEIGYTKGEYMFDANSCGILSALHSQSPDINRGVDRKEEIADEFDRVGAGDQGMMFGYACTETPELMPAAIQYAQELVRLLAEIRKEGKIMTYLRPDAKSQVTLEYDGNDNVLRVEAVVVSTQHDPEPAGMSEAEFQAVIKNDVIENVIKKVIPAKLIDENTKFHINPTGRFEIGGPHGDTGLTGRKIIVDTYGGAAPHGGGAFSGKDPSKVDRSAAYAARHVAKNIVAAGLADKCTVQVSYAIGVARPISIYINTHGTSKHGLSDEQIQEKAEAIFDLRPLAIIRRFNLDRPHGWCYRDTAAYGHFGREQFPWEKTEKVAELKAALGL</sequence>
<evidence type="ECO:0000255" key="1">
    <source>
        <dbReference type="HAMAP-Rule" id="MF_00086"/>
    </source>
</evidence>
<evidence type="ECO:0000305" key="2"/>
<proteinExistence type="inferred from homology"/>
<gene>
    <name evidence="1" type="primary">metK</name>
    <name type="ordered locus">CT0722</name>
</gene>
<dbReference type="EC" id="2.5.1.6" evidence="1"/>
<dbReference type="EMBL" id="AE006470">
    <property type="protein sequence ID" value="AAM71959.1"/>
    <property type="status" value="ALT_INIT"/>
    <property type="molecule type" value="Genomic_DNA"/>
</dbReference>
<dbReference type="RefSeq" id="NP_661617.2">
    <property type="nucleotide sequence ID" value="NC_002932.3"/>
</dbReference>
<dbReference type="RefSeq" id="WP_010932404.1">
    <property type="nucleotide sequence ID" value="NC_002932.3"/>
</dbReference>
<dbReference type="SMR" id="Q8KEG7"/>
<dbReference type="STRING" id="194439.CT0722"/>
<dbReference type="EnsemblBacteria" id="AAM71959">
    <property type="protein sequence ID" value="AAM71959"/>
    <property type="gene ID" value="CT0722"/>
</dbReference>
<dbReference type="KEGG" id="cte:CT0722"/>
<dbReference type="PATRIC" id="fig|194439.7.peg.662"/>
<dbReference type="eggNOG" id="COG0192">
    <property type="taxonomic scope" value="Bacteria"/>
</dbReference>
<dbReference type="HOGENOM" id="CLU_041802_1_1_10"/>
<dbReference type="OrthoDB" id="9801686at2"/>
<dbReference type="UniPathway" id="UPA00315">
    <property type="reaction ID" value="UER00080"/>
</dbReference>
<dbReference type="Proteomes" id="UP000001007">
    <property type="component" value="Chromosome"/>
</dbReference>
<dbReference type="GO" id="GO:0005737">
    <property type="term" value="C:cytoplasm"/>
    <property type="evidence" value="ECO:0007669"/>
    <property type="project" value="UniProtKB-SubCell"/>
</dbReference>
<dbReference type="GO" id="GO:0005524">
    <property type="term" value="F:ATP binding"/>
    <property type="evidence" value="ECO:0007669"/>
    <property type="project" value="UniProtKB-UniRule"/>
</dbReference>
<dbReference type="GO" id="GO:0000287">
    <property type="term" value="F:magnesium ion binding"/>
    <property type="evidence" value="ECO:0007669"/>
    <property type="project" value="UniProtKB-UniRule"/>
</dbReference>
<dbReference type="GO" id="GO:0004478">
    <property type="term" value="F:methionine adenosyltransferase activity"/>
    <property type="evidence" value="ECO:0007669"/>
    <property type="project" value="UniProtKB-UniRule"/>
</dbReference>
<dbReference type="GO" id="GO:0006730">
    <property type="term" value="P:one-carbon metabolic process"/>
    <property type="evidence" value="ECO:0007669"/>
    <property type="project" value="UniProtKB-KW"/>
</dbReference>
<dbReference type="GO" id="GO:0006556">
    <property type="term" value="P:S-adenosylmethionine biosynthetic process"/>
    <property type="evidence" value="ECO:0007669"/>
    <property type="project" value="UniProtKB-UniRule"/>
</dbReference>
<dbReference type="CDD" id="cd18079">
    <property type="entry name" value="S-AdoMet_synt"/>
    <property type="match status" value="1"/>
</dbReference>
<dbReference type="FunFam" id="3.30.300.10:FF:000003">
    <property type="entry name" value="S-adenosylmethionine synthase"/>
    <property type="match status" value="1"/>
</dbReference>
<dbReference type="Gene3D" id="3.30.300.10">
    <property type="match status" value="3"/>
</dbReference>
<dbReference type="HAMAP" id="MF_00086">
    <property type="entry name" value="S_AdoMet_synth1"/>
    <property type="match status" value="1"/>
</dbReference>
<dbReference type="InterPro" id="IPR022631">
    <property type="entry name" value="ADOMET_SYNTHASE_CS"/>
</dbReference>
<dbReference type="InterPro" id="IPR022630">
    <property type="entry name" value="S-AdoMet_synt_C"/>
</dbReference>
<dbReference type="InterPro" id="IPR022629">
    <property type="entry name" value="S-AdoMet_synt_central"/>
</dbReference>
<dbReference type="InterPro" id="IPR022628">
    <property type="entry name" value="S-AdoMet_synt_N"/>
</dbReference>
<dbReference type="InterPro" id="IPR002133">
    <property type="entry name" value="S-AdoMet_synthetase"/>
</dbReference>
<dbReference type="InterPro" id="IPR022636">
    <property type="entry name" value="S-AdoMet_synthetase_sfam"/>
</dbReference>
<dbReference type="NCBIfam" id="TIGR01034">
    <property type="entry name" value="metK"/>
    <property type="match status" value="1"/>
</dbReference>
<dbReference type="PANTHER" id="PTHR11964">
    <property type="entry name" value="S-ADENOSYLMETHIONINE SYNTHETASE"/>
    <property type="match status" value="1"/>
</dbReference>
<dbReference type="Pfam" id="PF02773">
    <property type="entry name" value="S-AdoMet_synt_C"/>
    <property type="match status" value="1"/>
</dbReference>
<dbReference type="Pfam" id="PF02772">
    <property type="entry name" value="S-AdoMet_synt_M"/>
    <property type="match status" value="1"/>
</dbReference>
<dbReference type="Pfam" id="PF00438">
    <property type="entry name" value="S-AdoMet_synt_N"/>
    <property type="match status" value="1"/>
</dbReference>
<dbReference type="PIRSF" id="PIRSF000497">
    <property type="entry name" value="MAT"/>
    <property type="match status" value="1"/>
</dbReference>
<dbReference type="SUPFAM" id="SSF55973">
    <property type="entry name" value="S-adenosylmethionine synthetase"/>
    <property type="match status" value="3"/>
</dbReference>
<dbReference type="PROSITE" id="PS00376">
    <property type="entry name" value="ADOMET_SYNTHASE_1"/>
    <property type="match status" value="1"/>
</dbReference>
<dbReference type="PROSITE" id="PS00377">
    <property type="entry name" value="ADOMET_SYNTHASE_2"/>
    <property type="match status" value="1"/>
</dbReference>
<feature type="chain" id="PRO_0000174507" description="S-adenosylmethionine synthase">
    <location>
        <begin position="1"/>
        <end position="404"/>
    </location>
</feature>
<feature type="region of interest" description="Flexible loop" evidence="1">
    <location>
        <begin position="101"/>
        <end position="111"/>
    </location>
</feature>
<feature type="binding site" description="in other chain" evidence="1">
    <location>
        <position position="17"/>
    </location>
    <ligand>
        <name>ATP</name>
        <dbReference type="ChEBI" id="CHEBI:30616"/>
        <note>ligand shared between two neighboring subunits</note>
    </ligand>
</feature>
<feature type="binding site" evidence="1">
    <location>
        <position position="19"/>
    </location>
    <ligand>
        <name>Mg(2+)</name>
        <dbReference type="ChEBI" id="CHEBI:18420"/>
    </ligand>
</feature>
<feature type="binding site" evidence="1">
    <location>
        <position position="45"/>
    </location>
    <ligand>
        <name>K(+)</name>
        <dbReference type="ChEBI" id="CHEBI:29103"/>
    </ligand>
</feature>
<feature type="binding site" description="in other chain" evidence="1">
    <location>
        <position position="58"/>
    </location>
    <ligand>
        <name>L-methionine</name>
        <dbReference type="ChEBI" id="CHEBI:57844"/>
        <note>ligand shared between two neighboring subunits</note>
    </ligand>
</feature>
<feature type="binding site" description="in other chain" evidence="1">
    <location>
        <position position="101"/>
    </location>
    <ligand>
        <name>L-methionine</name>
        <dbReference type="ChEBI" id="CHEBI:57844"/>
        <note>ligand shared between two neighboring subunits</note>
    </ligand>
</feature>
<feature type="binding site" description="in other chain" evidence="1">
    <location>
        <begin position="172"/>
        <end position="174"/>
    </location>
    <ligand>
        <name>ATP</name>
        <dbReference type="ChEBI" id="CHEBI:30616"/>
        <note>ligand shared between two neighboring subunits</note>
    </ligand>
</feature>
<feature type="binding site" description="in other chain" evidence="1">
    <location>
        <begin position="246"/>
        <end position="247"/>
    </location>
    <ligand>
        <name>ATP</name>
        <dbReference type="ChEBI" id="CHEBI:30616"/>
        <note>ligand shared between two neighboring subunits</note>
    </ligand>
</feature>
<feature type="binding site" evidence="1">
    <location>
        <position position="255"/>
    </location>
    <ligand>
        <name>ATP</name>
        <dbReference type="ChEBI" id="CHEBI:30616"/>
        <note>ligand shared between two neighboring subunits</note>
    </ligand>
</feature>
<feature type="binding site" evidence="1">
    <location>
        <position position="255"/>
    </location>
    <ligand>
        <name>L-methionine</name>
        <dbReference type="ChEBI" id="CHEBI:57844"/>
        <note>ligand shared between two neighboring subunits</note>
    </ligand>
</feature>
<feature type="binding site" description="in other chain" evidence="1">
    <location>
        <begin position="261"/>
        <end position="262"/>
    </location>
    <ligand>
        <name>ATP</name>
        <dbReference type="ChEBI" id="CHEBI:30616"/>
        <note>ligand shared between two neighboring subunits</note>
    </ligand>
</feature>
<feature type="binding site" evidence="1">
    <location>
        <position position="278"/>
    </location>
    <ligand>
        <name>ATP</name>
        <dbReference type="ChEBI" id="CHEBI:30616"/>
        <note>ligand shared between two neighboring subunits</note>
    </ligand>
</feature>
<feature type="binding site" evidence="1">
    <location>
        <position position="282"/>
    </location>
    <ligand>
        <name>ATP</name>
        <dbReference type="ChEBI" id="CHEBI:30616"/>
        <note>ligand shared between two neighboring subunits</note>
    </ligand>
</feature>
<feature type="binding site" description="in other chain" evidence="1">
    <location>
        <position position="286"/>
    </location>
    <ligand>
        <name>L-methionine</name>
        <dbReference type="ChEBI" id="CHEBI:57844"/>
        <note>ligand shared between two neighboring subunits</note>
    </ligand>
</feature>
<organism>
    <name type="scientific">Chlorobaculum tepidum (strain ATCC 49652 / DSM 12025 / NBRC 103806 / TLS)</name>
    <name type="common">Chlorobium tepidum</name>
    <dbReference type="NCBI Taxonomy" id="194439"/>
    <lineage>
        <taxon>Bacteria</taxon>
        <taxon>Pseudomonadati</taxon>
        <taxon>Chlorobiota</taxon>
        <taxon>Chlorobiia</taxon>
        <taxon>Chlorobiales</taxon>
        <taxon>Chlorobiaceae</taxon>
        <taxon>Chlorobaculum</taxon>
    </lineage>
</organism>